<reference key="1">
    <citation type="journal article" date="2006" name="Proc. Natl. Acad. Sci. U.S.A.">
        <title>Comparative genomics of the lactic acid bacteria.</title>
        <authorList>
            <person name="Makarova K.S."/>
            <person name="Slesarev A."/>
            <person name="Wolf Y.I."/>
            <person name="Sorokin A."/>
            <person name="Mirkin B."/>
            <person name="Koonin E.V."/>
            <person name="Pavlov A."/>
            <person name="Pavlova N."/>
            <person name="Karamychev V."/>
            <person name="Polouchine N."/>
            <person name="Shakhova V."/>
            <person name="Grigoriev I."/>
            <person name="Lou Y."/>
            <person name="Rohksar D."/>
            <person name="Lucas S."/>
            <person name="Huang K."/>
            <person name="Goodstein D.M."/>
            <person name="Hawkins T."/>
            <person name="Plengvidhya V."/>
            <person name="Welker D."/>
            <person name="Hughes J."/>
            <person name="Goh Y."/>
            <person name="Benson A."/>
            <person name="Baldwin K."/>
            <person name="Lee J.-H."/>
            <person name="Diaz-Muniz I."/>
            <person name="Dosti B."/>
            <person name="Smeianov V."/>
            <person name="Wechter W."/>
            <person name="Barabote R."/>
            <person name="Lorca G."/>
            <person name="Altermann E."/>
            <person name="Barrangou R."/>
            <person name="Ganesan B."/>
            <person name="Xie Y."/>
            <person name="Rawsthorne H."/>
            <person name="Tamir D."/>
            <person name="Parker C."/>
            <person name="Breidt F."/>
            <person name="Broadbent J.R."/>
            <person name="Hutkins R."/>
            <person name="O'Sullivan D."/>
            <person name="Steele J."/>
            <person name="Unlu G."/>
            <person name="Saier M.H. Jr."/>
            <person name="Klaenhammer T."/>
            <person name="Richardson P."/>
            <person name="Kozyavkin S."/>
            <person name="Weimer B.C."/>
            <person name="Mills D.A."/>
        </authorList>
    </citation>
    <scope>NUCLEOTIDE SEQUENCE [LARGE SCALE GENOMIC DNA]</scope>
    <source>
        <strain>ATCC 33323 / DSM 20243 / BCRC 14619 / CIP 102991 / JCM 1131 / KCTC 3163 / NCIMB 11718 / NCTC 13722 / AM63</strain>
    </source>
</reference>
<accession>Q044A7</accession>
<name>LEPA_LACGA</name>
<proteinExistence type="inferred from homology"/>
<feature type="chain" id="PRO_1000032011" description="Elongation factor 4">
    <location>
        <begin position="1"/>
        <end position="612"/>
    </location>
</feature>
<feature type="domain" description="tr-type G">
    <location>
        <begin position="11"/>
        <end position="193"/>
    </location>
</feature>
<feature type="binding site" evidence="1">
    <location>
        <begin position="23"/>
        <end position="28"/>
    </location>
    <ligand>
        <name>GTP</name>
        <dbReference type="ChEBI" id="CHEBI:37565"/>
    </ligand>
</feature>
<feature type="binding site" evidence="1">
    <location>
        <begin position="140"/>
        <end position="143"/>
    </location>
    <ligand>
        <name>GTP</name>
        <dbReference type="ChEBI" id="CHEBI:37565"/>
    </ligand>
</feature>
<gene>
    <name evidence="1" type="primary">lepA</name>
    <name type="ordered locus">LGAS_0824</name>
</gene>
<dbReference type="EC" id="3.6.5.n1" evidence="1"/>
<dbReference type="EMBL" id="CP000413">
    <property type="protein sequence ID" value="ABJ60215.1"/>
    <property type="molecule type" value="Genomic_DNA"/>
</dbReference>
<dbReference type="RefSeq" id="WP_003647470.1">
    <property type="nucleotide sequence ID" value="NZ_WBMG01000005.1"/>
</dbReference>
<dbReference type="SMR" id="Q044A7"/>
<dbReference type="GeneID" id="29640190"/>
<dbReference type="KEGG" id="lga:LGAS_0824"/>
<dbReference type="HOGENOM" id="CLU_009995_3_3_9"/>
<dbReference type="BioCyc" id="LGAS324831:G1G6Y-818-MONOMER"/>
<dbReference type="Proteomes" id="UP000000664">
    <property type="component" value="Chromosome"/>
</dbReference>
<dbReference type="GO" id="GO:0005886">
    <property type="term" value="C:plasma membrane"/>
    <property type="evidence" value="ECO:0007669"/>
    <property type="project" value="UniProtKB-SubCell"/>
</dbReference>
<dbReference type="GO" id="GO:0005525">
    <property type="term" value="F:GTP binding"/>
    <property type="evidence" value="ECO:0007669"/>
    <property type="project" value="UniProtKB-UniRule"/>
</dbReference>
<dbReference type="GO" id="GO:0003924">
    <property type="term" value="F:GTPase activity"/>
    <property type="evidence" value="ECO:0007669"/>
    <property type="project" value="UniProtKB-UniRule"/>
</dbReference>
<dbReference type="GO" id="GO:0043022">
    <property type="term" value="F:ribosome binding"/>
    <property type="evidence" value="ECO:0007669"/>
    <property type="project" value="UniProtKB-UniRule"/>
</dbReference>
<dbReference type="GO" id="GO:0003746">
    <property type="term" value="F:translation elongation factor activity"/>
    <property type="evidence" value="ECO:0007669"/>
    <property type="project" value="UniProtKB-UniRule"/>
</dbReference>
<dbReference type="GO" id="GO:0045727">
    <property type="term" value="P:positive regulation of translation"/>
    <property type="evidence" value="ECO:0007669"/>
    <property type="project" value="UniProtKB-UniRule"/>
</dbReference>
<dbReference type="CDD" id="cd03699">
    <property type="entry name" value="EF4_II"/>
    <property type="match status" value="1"/>
</dbReference>
<dbReference type="CDD" id="cd16260">
    <property type="entry name" value="EF4_III"/>
    <property type="match status" value="1"/>
</dbReference>
<dbReference type="CDD" id="cd01890">
    <property type="entry name" value="LepA"/>
    <property type="match status" value="1"/>
</dbReference>
<dbReference type="CDD" id="cd03709">
    <property type="entry name" value="lepA_C"/>
    <property type="match status" value="1"/>
</dbReference>
<dbReference type="FunFam" id="3.40.50.300:FF:000078">
    <property type="entry name" value="Elongation factor 4"/>
    <property type="match status" value="1"/>
</dbReference>
<dbReference type="FunFam" id="2.40.30.10:FF:000015">
    <property type="entry name" value="Translation factor GUF1, mitochondrial"/>
    <property type="match status" value="1"/>
</dbReference>
<dbReference type="FunFam" id="3.30.70.240:FF:000007">
    <property type="entry name" value="Translation factor GUF1, mitochondrial"/>
    <property type="match status" value="1"/>
</dbReference>
<dbReference type="FunFam" id="3.30.70.2570:FF:000001">
    <property type="entry name" value="Translation factor GUF1, mitochondrial"/>
    <property type="match status" value="1"/>
</dbReference>
<dbReference type="FunFam" id="3.30.70.870:FF:000004">
    <property type="entry name" value="Translation factor GUF1, mitochondrial"/>
    <property type="match status" value="1"/>
</dbReference>
<dbReference type="Gene3D" id="3.30.70.240">
    <property type="match status" value="1"/>
</dbReference>
<dbReference type="Gene3D" id="3.30.70.2570">
    <property type="entry name" value="Elongation factor 4, C-terminal domain"/>
    <property type="match status" value="1"/>
</dbReference>
<dbReference type="Gene3D" id="3.30.70.870">
    <property type="entry name" value="Elongation Factor G (Translational Gtpase), domain 3"/>
    <property type="match status" value="1"/>
</dbReference>
<dbReference type="Gene3D" id="3.40.50.300">
    <property type="entry name" value="P-loop containing nucleotide triphosphate hydrolases"/>
    <property type="match status" value="1"/>
</dbReference>
<dbReference type="Gene3D" id="2.40.30.10">
    <property type="entry name" value="Translation factors"/>
    <property type="match status" value="1"/>
</dbReference>
<dbReference type="HAMAP" id="MF_00071">
    <property type="entry name" value="LepA"/>
    <property type="match status" value="1"/>
</dbReference>
<dbReference type="InterPro" id="IPR006297">
    <property type="entry name" value="EF-4"/>
</dbReference>
<dbReference type="InterPro" id="IPR035647">
    <property type="entry name" value="EFG_III/V"/>
</dbReference>
<dbReference type="InterPro" id="IPR000640">
    <property type="entry name" value="EFG_V-like"/>
</dbReference>
<dbReference type="InterPro" id="IPR004161">
    <property type="entry name" value="EFTu-like_2"/>
</dbReference>
<dbReference type="InterPro" id="IPR038363">
    <property type="entry name" value="LepA_C_sf"/>
</dbReference>
<dbReference type="InterPro" id="IPR013842">
    <property type="entry name" value="LepA_CTD"/>
</dbReference>
<dbReference type="InterPro" id="IPR035654">
    <property type="entry name" value="LepA_IV"/>
</dbReference>
<dbReference type="InterPro" id="IPR027417">
    <property type="entry name" value="P-loop_NTPase"/>
</dbReference>
<dbReference type="InterPro" id="IPR005225">
    <property type="entry name" value="Small_GTP-bd"/>
</dbReference>
<dbReference type="InterPro" id="IPR000795">
    <property type="entry name" value="T_Tr_GTP-bd_dom"/>
</dbReference>
<dbReference type="NCBIfam" id="TIGR01393">
    <property type="entry name" value="lepA"/>
    <property type="match status" value="1"/>
</dbReference>
<dbReference type="NCBIfam" id="TIGR00231">
    <property type="entry name" value="small_GTP"/>
    <property type="match status" value="1"/>
</dbReference>
<dbReference type="PANTHER" id="PTHR43512:SF4">
    <property type="entry name" value="TRANSLATION FACTOR GUF1 HOMOLOG, CHLOROPLASTIC"/>
    <property type="match status" value="1"/>
</dbReference>
<dbReference type="PANTHER" id="PTHR43512">
    <property type="entry name" value="TRANSLATION FACTOR GUF1-RELATED"/>
    <property type="match status" value="1"/>
</dbReference>
<dbReference type="Pfam" id="PF00679">
    <property type="entry name" value="EFG_C"/>
    <property type="match status" value="1"/>
</dbReference>
<dbReference type="Pfam" id="PF00009">
    <property type="entry name" value="GTP_EFTU"/>
    <property type="match status" value="1"/>
</dbReference>
<dbReference type="Pfam" id="PF03144">
    <property type="entry name" value="GTP_EFTU_D2"/>
    <property type="match status" value="1"/>
</dbReference>
<dbReference type="Pfam" id="PF06421">
    <property type="entry name" value="LepA_C"/>
    <property type="match status" value="1"/>
</dbReference>
<dbReference type="PRINTS" id="PR00315">
    <property type="entry name" value="ELONGATNFCT"/>
</dbReference>
<dbReference type="SMART" id="SM00838">
    <property type="entry name" value="EFG_C"/>
    <property type="match status" value="1"/>
</dbReference>
<dbReference type="SUPFAM" id="SSF54980">
    <property type="entry name" value="EF-G C-terminal domain-like"/>
    <property type="match status" value="2"/>
</dbReference>
<dbReference type="SUPFAM" id="SSF52540">
    <property type="entry name" value="P-loop containing nucleoside triphosphate hydrolases"/>
    <property type="match status" value="1"/>
</dbReference>
<dbReference type="PROSITE" id="PS51722">
    <property type="entry name" value="G_TR_2"/>
    <property type="match status" value="1"/>
</dbReference>
<keyword id="KW-1003">Cell membrane</keyword>
<keyword id="KW-0342">GTP-binding</keyword>
<keyword id="KW-0378">Hydrolase</keyword>
<keyword id="KW-0472">Membrane</keyword>
<keyword id="KW-0547">Nucleotide-binding</keyword>
<keyword id="KW-0648">Protein biosynthesis</keyword>
<protein>
    <recommendedName>
        <fullName evidence="1">Elongation factor 4</fullName>
        <shortName evidence="1">EF-4</shortName>
        <ecNumber evidence="1">3.6.5.n1</ecNumber>
    </recommendedName>
    <alternativeName>
        <fullName evidence="1">Ribosomal back-translocase LepA</fullName>
    </alternativeName>
</protein>
<organism>
    <name type="scientific">Lactobacillus gasseri (strain ATCC 33323 / DSM 20243 / BCRC 14619 / CIP 102991 / JCM 1131 / KCTC 3163 / NCIMB 11718 / NCTC 13722 / AM63)</name>
    <dbReference type="NCBI Taxonomy" id="324831"/>
    <lineage>
        <taxon>Bacteria</taxon>
        <taxon>Bacillati</taxon>
        <taxon>Bacillota</taxon>
        <taxon>Bacilli</taxon>
        <taxon>Lactobacillales</taxon>
        <taxon>Lactobacillaceae</taxon>
        <taxon>Lactobacillus</taxon>
    </lineage>
</organism>
<comment type="function">
    <text evidence="1">Required for accurate and efficient protein synthesis under certain stress conditions. May act as a fidelity factor of the translation reaction, by catalyzing a one-codon backward translocation of tRNAs on improperly translocated ribosomes. Back-translocation proceeds from a post-translocation (POST) complex to a pre-translocation (PRE) complex, thus giving elongation factor G a second chance to translocate the tRNAs correctly. Binds to ribosomes in a GTP-dependent manner.</text>
</comment>
<comment type="catalytic activity">
    <reaction evidence="1">
        <text>GTP + H2O = GDP + phosphate + H(+)</text>
        <dbReference type="Rhea" id="RHEA:19669"/>
        <dbReference type="ChEBI" id="CHEBI:15377"/>
        <dbReference type="ChEBI" id="CHEBI:15378"/>
        <dbReference type="ChEBI" id="CHEBI:37565"/>
        <dbReference type="ChEBI" id="CHEBI:43474"/>
        <dbReference type="ChEBI" id="CHEBI:58189"/>
        <dbReference type="EC" id="3.6.5.n1"/>
    </reaction>
</comment>
<comment type="subcellular location">
    <subcellularLocation>
        <location evidence="1">Cell membrane</location>
        <topology evidence="1">Peripheral membrane protein</topology>
        <orientation evidence="1">Cytoplasmic side</orientation>
    </subcellularLocation>
</comment>
<comment type="similarity">
    <text evidence="1">Belongs to the TRAFAC class translation factor GTPase superfamily. Classic translation factor GTPase family. LepA subfamily.</text>
</comment>
<sequence>MDIKKLQDYQKHIRNFSIVAHIDHGKSTIADRILELTDTVSERQMKNQLLDDMPLERQRGITIKLNSVEVKYHAKDGETYIFHLIDTPGHVDFSYEVSRSLAACEGALLVVDATQGVQAQTLANTYLAIDDDLEILPVINKIDLPSADPEMCKNEIEEMIGLDASDAVEVSGKTGQGIPELLEEIVKKVPAPNGDLNAPLKALIFDSKYDDYRGVVLSVRIEEGTVKPGDRIRIMNTGKEFEVTEVGVSSPHPVKKDMLIAGDVGYLTANIKSVRETRVGDTITSAENPTEKPLPGYRQIPPMVYSGMYPVDNQKYDDLKEALQKLQLNDAALEFEPETSQALGFGFRCGFLGLLHMDVVQERLEQEFGMDLIMTAPSVDYHAIMNDGSTKLIDNPADLPDAGEYKEVQEPYVKAEVMVPNDFVGPVMELCQRKRGEFVTMDYLDKYRVNVIYNMPLAEIIYDFFDELKSSTKGYASLDYEITGYRATDLVKIDMLLNKEPIDALSFIAHREEAQNRARQMTTMLKKLIPRQNFEVDIQGAIGAKIISRATIKPYRKDVTWKIHTGDPDRRAKLLEKQRRGKKRMKAVGKVEVPQDAFMAVLKMNDDDIKGK</sequence>
<evidence type="ECO:0000255" key="1">
    <source>
        <dbReference type="HAMAP-Rule" id="MF_00071"/>
    </source>
</evidence>